<reference key="1">
    <citation type="submission" date="2006-08" db="EMBL/GenBank/DDBJ databases">
        <title>Identification of human F-box only 48 (FBXO48).</title>
        <authorList>
            <person name="Corcoran M.M."/>
            <person name="Cepeda D."/>
            <person name="Akhondi S."/>
            <person name="Spruck C."/>
            <person name="Sangfelt O."/>
        </authorList>
    </citation>
    <scope>NUCLEOTIDE SEQUENCE [MRNA]</scope>
</reference>
<reference key="2">
    <citation type="journal article" date="2004" name="Genome Res.">
        <title>The status, quality, and expansion of the NIH full-length cDNA project: the Mammalian Gene Collection (MGC).</title>
        <authorList>
            <consortium name="The MGC Project Team"/>
        </authorList>
    </citation>
    <scope>NUCLEOTIDE SEQUENCE [LARGE SCALE MRNA]</scope>
    <source>
        <tissue>Lymph</tissue>
    </source>
</reference>
<comment type="interaction">
    <interactant intactId="EBI-11961122">
        <id>Q5FWF7</id>
    </interactant>
    <interactant intactId="EBI-307486">
        <id>P63208</id>
        <label>SKP1</label>
    </interactant>
    <organismsDiffer>false</organismsDiffer>
    <experiments>5</experiments>
</comment>
<evidence type="ECO:0000255" key="1">
    <source>
        <dbReference type="PROSITE-ProRule" id="PRU00080"/>
    </source>
</evidence>
<evidence type="ECO:0000256" key="2">
    <source>
        <dbReference type="SAM" id="MobiDB-lite"/>
    </source>
</evidence>
<keyword id="KW-1267">Proteomics identification</keyword>
<keyword id="KW-1185">Reference proteome</keyword>
<sequence length="155" mass="18241">MHKNSKRNNNLRVSHTEANSVDAEKEKNESQNNFFELLPAEITFKIFSQLDIRSLCRASLTCRSWNDTIRNSDSLWKPHCMTVRAVCRREIDDDLESGYSWRVILLRNYQKSKVKHEWLSGRYSNICSPISLPEKIMYPMDADTWGEILEAELER</sequence>
<accession>Q5FWF7</accession>
<proteinExistence type="evidence at protein level"/>
<dbReference type="EMBL" id="DQ904332">
    <property type="protein sequence ID" value="ABI98402.1"/>
    <property type="molecule type" value="mRNA"/>
</dbReference>
<dbReference type="EMBL" id="BC089423">
    <property type="protein sequence ID" value="AAH89423.1"/>
    <property type="molecule type" value="mRNA"/>
</dbReference>
<dbReference type="CCDS" id="CCDS33213.1"/>
<dbReference type="RefSeq" id="NP_001019851.1">
    <property type="nucleotide sequence ID" value="NM_001024680.3"/>
</dbReference>
<dbReference type="RefSeq" id="XP_005264464.1">
    <property type="nucleotide sequence ID" value="XM_005264407.4"/>
</dbReference>
<dbReference type="RefSeq" id="XP_016859926.1">
    <property type="nucleotide sequence ID" value="XM_017004437.3"/>
</dbReference>
<dbReference type="RefSeq" id="XP_054198807.1">
    <property type="nucleotide sequence ID" value="XM_054342832.1"/>
</dbReference>
<dbReference type="RefSeq" id="XP_054198808.1">
    <property type="nucleotide sequence ID" value="XM_054342833.1"/>
</dbReference>
<dbReference type="BioGRID" id="299847">
    <property type="interactions" value="5"/>
</dbReference>
<dbReference type="FunCoup" id="Q5FWF7">
    <property type="interactions" value="204"/>
</dbReference>
<dbReference type="IntAct" id="Q5FWF7">
    <property type="interactions" value="1"/>
</dbReference>
<dbReference type="STRING" id="9606.ENSP00000367193"/>
<dbReference type="iPTMnet" id="Q5FWF7"/>
<dbReference type="PhosphoSitePlus" id="Q5FWF7"/>
<dbReference type="BioMuta" id="FBXO48"/>
<dbReference type="DMDM" id="74755340"/>
<dbReference type="MassIVE" id="Q5FWF7"/>
<dbReference type="PaxDb" id="9606-ENSP00000367193"/>
<dbReference type="PeptideAtlas" id="Q5FWF7"/>
<dbReference type="ProteomicsDB" id="62818"/>
<dbReference type="Antibodypedia" id="63770">
    <property type="antibodies" value="40 antibodies from 6 providers"/>
</dbReference>
<dbReference type="DNASU" id="554251"/>
<dbReference type="Ensembl" id="ENST00000377957.4">
    <property type="protein sequence ID" value="ENSP00000367193.2"/>
    <property type="gene ID" value="ENSG00000204923.4"/>
</dbReference>
<dbReference type="GeneID" id="554251"/>
<dbReference type="KEGG" id="hsa:554251"/>
<dbReference type="MANE-Select" id="ENST00000377957.4">
    <property type="protein sequence ID" value="ENSP00000367193.2"/>
    <property type="RefSeq nucleotide sequence ID" value="NM_001024680.3"/>
    <property type="RefSeq protein sequence ID" value="NP_001019851.1"/>
</dbReference>
<dbReference type="UCSC" id="uc002seo.5">
    <property type="organism name" value="human"/>
</dbReference>
<dbReference type="AGR" id="HGNC:33857"/>
<dbReference type="CTD" id="554251"/>
<dbReference type="DisGeNET" id="554251"/>
<dbReference type="GeneCards" id="FBXO48"/>
<dbReference type="HGNC" id="HGNC:33857">
    <property type="gene designation" value="FBXO48"/>
</dbReference>
<dbReference type="HPA" id="ENSG00000204923">
    <property type="expression patterns" value="Low tissue specificity"/>
</dbReference>
<dbReference type="MIM" id="620549">
    <property type="type" value="gene"/>
</dbReference>
<dbReference type="neXtProt" id="NX_Q5FWF7"/>
<dbReference type="OpenTargets" id="ENSG00000204923"/>
<dbReference type="PharmGKB" id="PA162388158"/>
<dbReference type="VEuPathDB" id="HostDB:ENSG00000204923"/>
<dbReference type="eggNOG" id="ENOG502S15Z">
    <property type="taxonomic scope" value="Eukaryota"/>
</dbReference>
<dbReference type="GeneTree" id="ENSGT00390000012248"/>
<dbReference type="HOGENOM" id="CLU_143592_0_0_1"/>
<dbReference type="InParanoid" id="Q5FWF7"/>
<dbReference type="OMA" id="IMCPMDA"/>
<dbReference type="OrthoDB" id="10257471at2759"/>
<dbReference type="PAN-GO" id="Q5FWF7">
    <property type="GO annotations" value="2 GO annotations based on evolutionary models"/>
</dbReference>
<dbReference type="PhylomeDB" id="Q5FWF7"/>
<dbReference type="TreeFam" id="TF332573"/>
<dbReference type="PathwayCommons" id="Q5FWF7"/>
<dbReference type="SignaLink" id="Q5FWF7"/>
<dbReference type="BioGRID-ORCS" id="554251">
    <property type="hits" value="11 hits in 1150 CRISPR screens"/>
</dbReference>
<dbReference type="ChiTaRS" id="FBXO48">
    <property type="organism name" value="human"/>
</dbReference>
<dbReference type="GenomeRNAi" id="554251"/>
<dbReference type="Pharos" id="Q5FWF7">
    <property type="development level" value="Tdark"/>
</dbReference>
<dbReference type="PRO" id="PR:Q5FWF7"/>
<dbReference type="Proteomes" id="UP000005640">
    <property type="component" value="Chromosome 2"/>
</dbReference>
<dbReference type="RNAct" id="Q5FWF7">
    <property type="molecule type" value="protein"/>
</dbReference>
<dbReference type="Bgee" id="ENSG00000204923">
    <property type="expression patterns" value="Expressed in thymus and 108 other cell types or tissues"/>
</dbReference>
<dbReference type="GO" id="GO:0005737">
    <property type="term" value="C:cytoplasm"/>
    <property type="evidence" value="ECO:0000318"/>
    <property type="project" value="GO_Central"/>
</dbReference>
<dbReference type="GO" id="GO:0019005">
    <property type="term" value="C:SCF ubiquitin ligase complex"/>
    <property type="evidence" value="ECO:0000318"/>
    <property type="project" value="GO_Central"/>
</dbReference>
<dbReference type="GO" id="GO:0031146">
    <property type="term" value="P:SCF-dependent proteasomal ubiquitin-dependent protein catabolic process"/>
    <property type="evidence" value="ECO:0000318"/>
    <property type="project" value="GO_Central"/>
</dbReference>
<dbReference type="CDD" id="cd22113">
    <property type="entry name" value="F-box_FBXO48"/>
    <property type="match status" value="1"/>
</dbReference>
<dbReference type="FunFam" id="1.20.1280.50:FF:000041">
    <property type="entry name" value="F-box only protein 48"/>
    <property type="match status" value="1"/>
</dbReference>
<dbReference type="Gene3D" id="1.20.1280.50">
    <property type="match status" value="1"/>
</dbReference>
<dbReference type="InterPro" id="IPR036047">
    <property type="entry name" value="F-box-like_dom_sf"/>
</dbReference>
<dbReference type="InterPro" id="IPR001810">
    <property type="entry name" value="F-box_dom"/>
</dbReference>
<dbReference type="PANTHER" id="PTHR12874:SF9">
    <property type="entry name" value="F-BOX ONLY PROTEIN 48"/>
    <property type="match status" value="1"/>
</dbReference>
<dbReference type="PANTHER" id="PTHR12874">
    <property type="entry name" value="F-BOX ONLY PROTEIN 48-RELATED"/>
    <property type="match status" value="1"/>
</dbReference>
<dbReference type="Pfam" id="PF12937">
    <property type="entry name" value="F-box-like"/>
    <property type="match status" value="1"/>
</dbReference>
<dbReference type="SMART" id="SM00256">
    <property type="entry name" value="FBOX"/>
    <property type="match status" value="1"/>
</dbReference>
<dbReference type="SUPFAM" id="SSF81383">
    <property type="entry name" value="F-box domain"/>
    <property type="match status" value="1"/>
</dbReference>
<dbReference type="PROSITE" id="PS50181">
    <property type="entry name" value="FBOX"/>
    <property type="match status" value="1"/>
</dbReference>
<gene>
    <name type="primary">FBXO48</name>
    <name type="synonym">FBX48</name>
</gene>
<name>FBX48_HUMAN</name>
<protein>
    <recommendedName>
        <fullName>F-box only protein 48</fullName>
    </recommendedName>
    <alternativeName>
        <fullName>F-box protein 48</fullName>
    </alternativeName>
</protein>
<feature type="chain" id="PRO_0000335677" description="F-box only protein 48">
    <location>
        <begin position="1"/>
        <end position="155"/>
    </location>
</feature>
<feature type="domain" description="F-box" evidence="1">
    <location>
        <begin position="32"/>
        <end position="79"/>
    </location>
</feature>
<feature type="region of interest" description="Disordered" evidence="2">
    <location>
        <begin position="1"/>
        <end position="27"/>
    </location>
</feature>
<feature type="compositionally biased region" description="Polar residues" evidence="2">
    <location>
        <begin position="7"/>
        <end position="19"/>
    </location>
</feature>
<feature type="sequence variant" id="VAR_043466" description="In dbSNP:rs12614904.">
    <original>T</original>
    <variation>I</variation>
    <location>
        <position position="16"/>
    </location>
</feature>
<organism>
    <name type="scientific">Homo sapiens</name>
    <name type="common">Human</name>
    <dbReference type="NCBI Taxonomy" id="9606"/>
    <lineage>
        <taxon>Eukaryota</taxon>
        <taxon>Metazoa</taxon>
        <taxon>Chordata</taxon>
        <taxon>Craniata</taxon>
        <taxon>Vertebrata</taxon>
        <taxon>Euteleostomi</taxon>
        <taxon>Mammalia</taxon>
        <taxon>Eutheria</taxon>
        <taxon>Euarchontoglires</taxon>
        <taxon>Primates</taxon>
        <taxon>Haplorrhini</taxon>
        <taxon>Catarrhini</taxon>
        <taxon>Hominidae</taxon>
        <taxon>Homo</taxon>
    </lineage>
</organism>